<keyword id="KW-0963">Cytoplasm</keyword>
<organism>
    <name type="scientific">Listeria innocua serovar 6a (strain ATCC BAA-680 / CLIP 11262)</name>
    <dbReference type="NCBI Taxonomy" id="272626"/>
    <lineage>
        <taxon>Bacteria</taxon>
        <taxon>Bacillati</taxon>
        <taxon>Bacillota</taxon>
        <taxon>Bacilli</taxon>
        <taxon>Bacillales</taxon>
        <taxon>Listeriaceae</taxon>
        <taxon>Listeria</taxon>
    </lineage>
</organism>
<proteinExistence type="inferred from homology"/>
<feature type="chain" id="PRO_0000094976" description="UPF0291 protein lin0497">
    <location>
        <begin position="1"/>
        <end position="74"/>
    </location>
</feature>
<evidence type="ECO:0000255" key="1">
    <source>
        <dbReference type="HAMAP-Rule" id="MF_01103"/>
    </source>
</evidence>
<reference key="1">
    <citation type="journal article" date="2001" name="Science">
        <title>Comparative genomics of Listeria species.</title>
        <authorList>
            <person name="Glaser P."/>
            <person name="Frangeul L."/>
            <person name="Buchrieser C."/>
            <person name="Rusniok C."/>
            <person name="Amend A."/>
            <person name="Baquero F."/>
            <person name="Berche P."/>
            <person name="Bloecker H."/>
            <person name="Brandt P."/>
            <person name="Chakraborty T."/>
            <person name="Charbit A."/>
            <person name="Chetouani F."/>
            <person name="Couve E."/>
            <person name="de Daruvar A."/>
            <person name="Dehoux P."/>
            <person name="Domann E."/>
            <person name="Dominguez-Bernal G."/>
            <person name="Duchaud E."/>
            <person name="Durant L."/>
            <person name="Dussurget O."/>
            <person name="Entian K.-D."/>
            <person name="Fsihi H."/>
            <person name="Garcia-del Portillo F."/>
            <person name="Garrido P."/>
            <person name="Gautier L."/>
            <person name="Goebel W."/>
            <person name="Gomez-Lopez N."/>
            <person name="Hain T."/>
            <person name="Hauf J."/>
            <person name="Jackson D."/>
            <person name="Jones L.-M."/>
            <person name="Kaerst U."/>
            <person name="Kreft J."/>
            <person name="Kuhn M."/>
            <person name="Kunst F."/>
            <person name="Kurapkat G."/>
            <person name="Madueno E."/>
            <person name="Maitournam A."/>
            <person name="Mata Vicente J."/>
            <person name="Ng E."/>
            <person name="Nedjari H."/>
            <person name="Nordsiek G."/>
            <person name="Novella S."/>
            <person name="de Pablos B."/>
            <person name="Perez-Diaz J.-C."/>
            <person name="Purcell R."/>
            <person name="Remmel B."/>
            <person name="Rose M."/>
            <person name="Schlueter T."/>
            <person name="Simoes N."/>
            <person name="Tierrez A."/>
            <person name="Vazquez-Boland J.-A."/>
            <person name="Voss H."/>
            <person name="Wehland J."/>
            <person name="Cossart P."/>
        </authorList>
    </citation>
    <scope>NUCLEOTIDE SEQUENCE [LARGE SCALE GENOMIC DNA]</scope>
    <source>
        <strain>ATCC BAA-680 / CLIP 11262</strain>
    </source>
</reference>
<comment type="subcellular location">
    <subcellularLocation>
        <location evidence="1">Cytoplasm</location>
    </subcellularLocation>
</comment>
<comment type="similarity">
    <text evidence="1">Belongs to the UPF0291 family.</text>
</comment>
<sequence length="74" mass="8436">MKLLLKNINELAAKQKSEGLTAFEKERQAALRQEYLKKIRGTVQDNLHHVTIIDPLGDDVTPKKLKEIQAELRG</sequence>
<dbReference type="EMBL" id="AL596165">
    <property type="protein sequence ID" value="CAC95729.1"/>
    <property type="molecule type" value="Genomic_DNA"/>
</dbReference>
<dbReference type="PIR" id="AI1494">
    <property type="entry name" value="AI1494"/>
</dbReference>
<dbReference type="RefSeq" id="WP_003721282.1">
    <property type="nucleotide sequence ID" value="NC_003212.1"/>
</dbReference>
<dbReference type="SMR" id="P60072"/>
<dbReference type="STRING" id="272626.gene:17564823"/>
<dbReference type="KEGG" id="lin:lin0497"/>
<dbReference type="eggNOG" id="COG4224">
    <property type="taxonomic scope" value="Bacteria"/>
</dbReference>
<dbReference type="HOGENOM" id="CLU_173137_0_2_9"/>
<dbReference type="OrthoDB" id="390105at2"/>
<dbReference type="Proteomes" id="UP000002513">
    <property type="component" value="Chromosome"/>
</dbReference>
<dbReference type="GO" id="GO:0005737">
    <property type="term" value="C:cytoplasm"/>
    <property type="evidence" value="ECO:0007669"/>
    <property type="project" value="UniProtKB-SubCell"/>
</dbReference>
<dbReference type="Gene3D" id="1.10.287.540">
    <property type="entry name" value="Helix hairpin bin"/>
    <property type="match status" value="1"/>
</dbReference>
<dbReference type="HAMAP" id="MF_01103">
    <property type="entry name" value="UPF0291"/>
    <property type="match status" value="1"/>
</dbReference>
<dbReference type="InterPro" id="IPR009242">
    <property type="entry name" value="DUF896"/>
</dbReference>
<dbReference type="PANTHER" id="PTHR37300">
    <property type="entry name" value="UPF0291 PROTEIN CBO2609/CLC_2481"/>
    <property type="match status" value="1"/>
</dbReference>
<dbReference type="PANTHER" id="PTHR37300:SF1">
    <property type="entry name" value="UPF0291 PROTEIN YNZC"/>
    <property type="match status" value="1"/>
</dbReference>
<dbReference type="Pfam" id="PF05979">
    <property type="entry name" value="DUF896"/>
    <property type="match status" value="1"/>
</dbReference>
<dbReference type="SUPFAM" id="SSF158221">
    <property type="entry name" value="YnzC-like"/>
    <property type="match status" value="1"/>
</dbReference>
<accession>P60072</accession>
<accession>Q92EG3</accession>
<protein>
    <recommendedName>
        <fullName evidence="1">UPF0291 protein lin0497</fullName>
    </recommendedName>
</protein>
<name>Y497_LISIN</name>
<gene>
    <name type="ordered locus">lin0497</name>
</gene>